<feature type="chain" id="PRO_0000375413" description="YcgL domain-containing protein YpAngola_A2398">
    <location>
        <begin position="1"/>
        <end position="90"/>
    </location>
</feature>
<feature type="domain" description="YcgL" evidence="1">
    <location>
        <begin position="1"/>
        <end position="85"/>
    </location>
</feature>
<reference key="1">
    <citation type="journal article" date="2010" name="J. Bacteriol.">
        <title>Genome sequence of the deep-rooted Yersinia pestis strain Angola reveals new insights into the evolution and pangenome of the plague bacterium.</title>
        <authorList>
            <person name="Eppinger M."/>
            <person name="Worsham P.L."/>
            <person name="Nikolich M.P."/>
            <person name="Riley D.R."/>
            <person name="Sebastian Y."/>
            <person name="Mou S."/>
            <person name="Achtman M."/>
            <person name="Lindler L.E."/>
            <person name="Ravel J."/>
        </authorList>
    </citation>
    <scope>NUCLEOTIDE SEQUENCE [LARGE SCALE GENOMIC DNA]</scope>
    <source>
        <strain>Angola</strain>
    </source>
</reference>
<gene>
    <name type="ordered locus">YpAngola_A2398</name>
</gene>
<sequence length="90" mass="10227">MLCAIYRSPKRDQTYLYIEKKDDFSRVPAELLASFGKPQFAMLLALNERKTLATADVEKVKNALIEQGFYLQVPPPPESLLKMHLGETKA</sequence>
<proteinExistence type="inferred from homology"/>
<protein>
    <recommendedName>
        <fullName evidence="1">YcgL domain-containing protein YpAngola_A2398</fullName>
    </recommendedName>
</protein>
<organism>
    <name type="scientific">Yersinia pestis bv. Antiqua (strain Angola)</name>
    <dbReference type="NCBI Taxonomy" id="349746"/>
    <lineage>
        <taxon>Bacteria</taxon>
        <taxon>Pseudomonadati</taxon>
        <taxon>Pseudomonadota</taxon>
        <taxon>Gammaproteobacteria</taxon>
        <taxon>Enterobacterales</taxon>
        <taxon>Yersiniaceae</taxon>
        <taxon>Yersinia</taxon>
    </lineage>
</organism>
<dbReference type="EMBL" id="CP000901">
    <property type="protein sequence ID" value="ABX86266.1"/>
    <property type="molecule type" value="Genomic_DNA"/>
</dbReference>
<dbReference type="RefSeq" id="WP_002211743.1">
    <property type="nucleotide sequence ID" value="NZ_CP009935.1"/>
</dbReference>
<dbReference type="SMR" id="A9QYV1"/>
<dbReference type="KEGG" id="ypg:YpAngola_A2398"/>
<dbReference type="PATRIC" id="fig|349746.12.peg.3414"/>
<dbReference type="Gene3D" id="3.10.510.20">
    <property type="entry name" value="YcgL domain"/>
    <property type="match status" value="1"/>
</dbReference>
<dbReference type="HAMAP" id="MF_01866">
    <property type="entry name" value="UPF0745"/>
    <property type="match status" value="1"/>
</dbReference>
<dbReference type="InterPro" id="IPR038068">
    <property type="entry name" value="YcgL-like_sf"/>
</dbReference>
<dbReference type="InterPro" id="IPR027354">
    <property type="entry name" value="YcgL_dom"/>
</dbReference>
<dbReference type="PANTHER" id="PTHR38109">
    <property type="entry name" value="PROTEIN YCGL"/>
    <property type="match status" value="1"/>
</dbReference>
<dbReference type="PANTHER" id="PTHR38109:SF1">
    <property type="entry name" value="PROTEIN YCGL"/>
    <property type="match status" value="1"/>
</dbReference>
<dbReference type="Pfam" id="PF05166">
    <property type="entry name" value="YcgL"/>
    <property type="match status" value="1"/>
</dbReference>
<dbReference type="SUPFAM" id="SSF160191">
    <property type="entry name" value="YcgL-like"/>
    <property type="match status" value="1"/>
</dbReference>
<dbReference type="PROSITE" id="PS51648">
    <property type="entry name" value="YCGL"/>
    <property type="match status" value="1"/>
</dbReference>
<evidence type="ECO:0000255" key="1">
    <source>
        <dbReference type="HAMAP-Rule" id="MF_01866"/>
    </source>
</evidence>
<accession>A9QYV1</accession>
<name>Y2398_YERPG</name>